<organism>
    <name type="scientific">Bradyrhizobium sp. (strain ORS 278)</name>
    <dbReference type="NCBI Taxonomy" id="114615"/>
    <lineage>
        <taxon>Bacteria</taxon>
        <taxon>Pseudomonadati</taxon>
        <taxon>Pseudomonadota</taxon>
        <taxon>Alphaproteobacteria</taxon>
        <taxon>Hyphomicrobiales</taxon>
        <taxon>Nitrobacteraceae</taxon>
        <taxon>Bradyrhizobium</taxon>
    </lineage>
</organism>
<feature type="chain" id="PRO_1000070544" description="Aerobic magnesium-protoporphyrin IX monomethyl ester [oxidative] cyclase">
    <location>
        <begin position="1"/>
        <end position="353"/>
    </location>
</feature>
<proteinExistence type="inferred from homology"/>
<comment type="function">
    <text evidence="1">Catalyzes the formation of the isocyclic ring in chlorophyll biosynthesis. Mediates the cyclase reaction, which results in the formation of divinylprotochlorophyllide (Pchlide) characteristic of all chlorophylls from magnesium-protoporphyrin IX 13-monomethyl ester (MgPMME).</text>
</comment>
<comment type="catalytic activity">
    <reaction evidence="1">
        <text>Mg-protoporphyrin IX 13-monomethyl ester + 3 NADPH + 3 O2 + 2 H(+) = 3,8-divinyl protochlorophyllide a + 3 NADP(+) + 5 H2O</text>
        <dbReference type="Rhea" id="RHEA:33235"/>
        <dbReference type="ChEBI" id="CHEBI:15377"/>
        <dbReference type="ChEBI" id="CHEBI:15378"/>
        <dbReference type="ChEBI" id="CHEBI:15379"/>
        <dbReference type="ChEBI" id="CHEBI:57783"/>
        <dbReference type="ChEBI" id="CHEBI:58349"/>
        <dbReference type="ChEBI" id="CHEBI:58632"/>
        <dbReference type="ChEBI" id="CHEBI:60491"/>
        <dbReference type="EC" id="1.14.13.81"/>
    </reaction>
</comment>
<comment type="cofactor">
    <cofactor evidence="1">
        <name>Fe cation</name>
        <dbReference type="ChEBI" id="CHEBI:24875"/>
    </cofactor>
</comment>
<comment type="pathway">
    <text evidence="1">Porphyrin-containing compound metabolism; bacteriochlorophyll biosynthesis (light-independent).</text>
</comment>
<comment type="similarity">
    <text evidence="1">Belongs to the AcsF family.</text>
</comment>
<accession>A4YNQ1</accession>
<sequence>MIAMEGGSGNISTKMALEDTILTPRFYTTDFAAMDRLNVDLVRREWDAVMAELRADHNRKHFVRTPEFDKDLNELPEALRAEFKDFLVSSLTAEFSGCVLYAEIKKRITNPDIRELFQFMSRDEARHAGFINEILKDHGIGVDLGFLTKTKKYTYFKPKFIFYATYLSEKIGYARYITIYRQMERHPERQFHPIFKWFERWCNDEFRHGEAFALLMRADPKLLSGYNKLWIKFFLLAVFATMHVRDHMRPAFYEALGMPPDEYDMRVFRITSEISRQVFPVMLDIDNPRFWEGLKRLREISEAIAEAKAQGGIMGTLKRAVLPLKAALTFGRLYMLPAKNNELPREIRLQPAW</sequence>
<keyword id="KW-0077">Bacteriochlorophyll biosynthesis</keyword>
<keyword id="KW-0149">Chlorophyll biosynthesis</keyword>
<keyword id="KW-0408">Iron</keyword>
<keyword id="KW-0479">Metal-binding</keyword>
<keyword id="KW-0521">NADP</keyword>
<keyword id="KW-0560">Oxidoreductase</keyword>
<keyword id="KW-0602">Photosynthesis</keyword>
<keyword id="KW-1185">Reference proteome</keyword>
<dbReference type="EC" id="1.14.13.81" evidence="1"/>
<dbReference type="EMBL" id="CU234118">
    <property type="protein sequence ID" value="CAL75527.1"/>
    <property type="molecule type" value="Genomic_DNA"/>
</dbReference>
<dbReference type="RefSeq" id="WP_011924755.1">
    <property type="nucleotide sequence ID" value="NC_009445.1"/>
</dbReference>
<dbReference type="STRING" id="114615.BRADO1649"/>
<dbReference type="KEGG" id="bra:BRADO1649"/>
<dbReference type="eggNOG" id="COG1633">
    <property type="taxonomic scope" value="Bacteria"/>
</dbReference>
<dbReference type="HOGENOM" id="CLU_048037_0_0_5"/>
<dbReference type="OrthoDB" id="141643at2"/>
<dbReference type="UniPathway" id="UPA00671"/>
<dbReference type="Proteomes" id="UP000001994">
    <property type="component" value="Chromosome"/>
</dbReference>
<dbReference type="GO" id="GO:0005506">
    <property type="term" value="F:iron ion binding"/>
    <property type="evidence" value="ECO:0007669"/>
    <property type="project" value="UniProtKB-UniRule"/>
</dbReference>
<dbReference type="GO" id="GO:0048529">
    <property type="term" value="F:magnesium-protoporphyrin IX monomethyl ester (oxidative) cyclase activity"/>
    <property type="evidence" value="ECO:0007669"/>
    <property type="project" value="UniProtKB-UniRule"/>
</dbReference>
<dbReference type="GO" id="GO:0036070">
    <property type="term" value="P:light-independent bacteriochlorophyll biosynthetic process"/>
    <property type="evidence" value="ECO:0007669"/>
    <property type="project" value="UniProtKB-UniRule"/>
</dbReference>
<dbReference type="GO" id="GO:0015979">
    <property type="term" value="P:photosynthesis"/>
    <property type="evidence" value="ECO:0007669"/>
    <property type="project" value="UniProtKB-UniRule"/>
</dbReference>
<dbReference type="CDD" id="cd01047">
    <property type="entry name" value="ACSF"/>
    <property type="match status" value="1"/>
</dbReference>
<dbReference type="HAMAP" id="MF_01840">
    <property type="entry name" value="AcsF"/>
    <property type="match status" value="1"/>
</dbReference>
<dbReference type="InterPro" id="IPR008434">
    <property type="entry name" value="AcsF"/>
</dbReference>
<dbReference type="InterPro" id="IPR009078">
    <property type="entry name" value="Ferritin-like_SF"/>
</dbReference>
<dbReference type="InterPro" id="IPR003251">
    <property type="entry name" value="Rr_diiron-bd_dom"/>
</dbReference>
<dbReference type="NCBIfam" id="TIGR02029">
    <property type="entry name" value="AcsF"/>
    <property type="match status" value="1"/>
</dbReference>
<dbReference type="NCBIfam" id="NF010172">
    <property type="entry name" value="PRK13654.1"/>
    <property type="match status" value="1"/>
</dbReference>
<dbReference type="PANTHER" id="PTHR31053">
    <property type="entry name" value="MAGNESIUM-PROTOPORPHYRIN IX MONOMETHYL ESTER [OXIDATIVE] CYCLASE, CHLOROPLASTIC"/>
    <property type="match status" value="1"/>
</dbReference>
<dbReference type="PANTHER" id="PTHR31053:SF2">
    <property type="entry name" value="MAGNESIUM-PROTOPORPHYRIN IX MONOMETHYL ESTER [OXIDATIVE] CYCLASE, CHLOROPLASTIC"/>
    <property type="match status" value="1"/>
</dbReference>
<dbReference type="Pfam" id="PF02915">
    <property type="entry name" value="Rubrerythrin"/>
    <property type="match status" value="1"/>
</dbReference>
<dbReference type="SUPFAM" id="SSF47240">
    <property type="entry name" value="Ferritin-like"/>
    <property type="match status" value="1"/>
</dbReference>
<evidence type="ECO:0000255" key="1">
    <source>
        <dbReference type="HAMAP-Rule" id="MF_01840"/>
    </source>
</evidence>
<name>ACSF_BRASO</name>
<protein>
    <recommendedName>
        <fullName evidence="1">Aerobic magnesium-protoporphyrin IX monomethyl ester [oxidative] cyclase</fullName>
        <shortName evidence="1">Aerobic Mg-protoporphyrin IX monomethyl ester oxidative cyclase</shortName>
        <ecNumber evidence="1">1.14.13.81</ecNumber>
    </recommendedName>
</protein>
<reference key="1">
    <citation type="journal article" date="2007" name="Science">
        <title>Legumes symbioses: absence of nod genes in photosynthetic bradyrhizobia.</title>
        <authorList>
            <person name="Giraud E."/>
            <person name="Moulin L."/>
            <person name="Vallenet D."/>
            <person name="Barbe V."/>
            <person name="Cytryn E."/>
            <person name="Avarre J.-C."/>
            <person name="Jaubert M."/>
            <person name="Simon D."/>
            <person name="Cartieaux F."/>
            <person name="Prin Y."/>
            <person name="Bena G."/>
            <person name="Hannibal L."/>
            <person name="Fardoux J."/>
            <person name="Kojadinovic M."/>
            <person name="Vuillet L."/>
            <person name="Lajus A."/>
            <person name="Cruveiller S."/>
            <person name="Rouy Z."/>
            <person name="Mangenot S."/>
            <person name="Segurens B."/>
            <person name="Dossat C."/>
            <person name="Franck W.L."/>
            <person name="Chang W.-S."/>
            <person name="Saunders E."/>
            <person name="Bruce D."/>
            <person name="Richardson P."/>
            <person name="Normand P."/>
            <person name="Dreyfus B."/>
            <person name="Pignol D."/>
            <person name="Stacey G."/>
            <person name="Emerich D."/>
            <person name="Vermeglio A."/>
            <person name="Medigue C."/>
            <person name="Sadowsky M."/>
        </authorList>
    </citation>
    <scope>NUCLEOTIDE SEQUENCE [LARGE SCALE GENOMIC DNA]</scope>
    <source>
        <strain>ORS 278</strain>
    </source>
</reference>
<gene>
    <name evidence="1" type="primary">acsF</name>
    <name type="ordered locus">BRADO1649</name>
</gene>